<accession>B8GQV7</accession>
<proteinExistence type="inferred from homology"/>
<evidence type="ECO:0000255" key="1">
    <source>
        <dbReference type="HAMAP-Rule" id="MF_00167"/>
    </source>
</evidence>
<sequence>MLILTRRVGETLMIGDQVSVTVLGVKGNQVRIGINAPKDVAVHREEIYERIKNEGDEGQATGGN</sequence>
<gene>
    <name evidence="1" type="primary">csrA</name>
    <name type="ordered locus">Tgr7_1291</name>
</gene>
<reference key="1">
    <citation type="journal article" date="2011" name="Stand. Genomic Sci.">
        <title>Complete genome sequence of 'Thioalkalivibrio sulfidophilus' HL-EbGr7.</title>
        <authorList>
            <person name="Muyzer G."/>
            <person name="Sorokin D.Y."/>
            <person name="Mavromatis K."/>
            <person name="Lapidus A."/>
            <person name="Clum A."/>
            <person name="Ivanova N."/>
            <person name="Pati A."/>
            <person name="d'Haeseleer P."/>
            <person name="Woyke T."/>
            <person name="Kyrpides N.C."/>
        </authorList>
    </citation>
    <scope>NUCLEOTIDE SEQUENCE [LARGE SCALE GENOMIC DNA]</scope>
    <source>
        <strain>HL-EbGR7</strain>
    </source>
</reference>
<protein>
    <recommendedName>
        <fullName evidence="1">Translational regulator CsrA</fullName>
    </recommendedName>
    <alternativeName>
        <fullName evidence="1">Carbon storage regulator</fullName>
    </alternativeName>
</protein>
<organism>
    <name type="scientific">Thioalkalivibrio sulfidiphilus (strain HL-EbGR7)</name>
    <dbReference type="NCBI Taxonomy" id="396588"/>
    <lineage>
        <taxon>Bacteria</taxon>
        <taxon>Pseudomonadati</taxon>
        <taxon>Pseudomonadota</taxon>
        <taxon>Gammaproteobacteria</taxon>
        <taxon>Chromatiales</taxon>
        <taxon>Ectothiorhodospiraceae</taxon>
        <taxon>Thioalkalivibrio</taxon>
    </lineage>
</organism>
<keyword id="KW-0010">Activator</keyword>
<keyword id="KW-0963">Cytoplasm</keyword>
<keyword id="KW-1185">Reference proteome</keyword>
<keyword id="KW-0678">Repressor</keyword>
<keyword id="KW-0694">RNA-binding</keyword>
<keyword id="KW-0810">Translation regulation</keyword>
<comment type="function">
    <text evidence="1">A key translational regulator that binds mRNA to regulate translation initiation and/or mRNA stability. Mediates global changes in gene expression, shifting from rapid growth to stress survival by linking envelope stress, the stringent response and the catabolite repression systems. Usually binds in the 5'-UTR; binding at or near the Shine-Dalgarno sequence prevents ribosome-binding, repressing translation, binding elsewhere in the 5'-UTR can activate translation and/or stabilize the mRNA. Its function is antagonized by small RNA(s).</text>
</comment>
<comment type="subunit">
    <text evidence="1">Homodimer; the beta-strands of each monomer intercalate to form a hydrophobic core, while the alpha-helices form wings that extend away from the core.</text>
</comment>
<comment type="subcellular location">
    <subcellularLocation>
        <location evidence="1">Cytoplasm</location>
    </subcellularLocation>
</comment>
<comment type="similarity">
    <text evidence="1">Belongs to the CsrA/RsmA family.</text>
</comment>
<dbReference type="EMBL" id="CP001339">
    <property type="protein sequence ID" value="ACL72377.1"/>
    <property type="molecule type" value="Genomic_DNA"/>
</dbReference>
<dbReference type="RefSeq" id="WP_012637860.1">
    <property type="nucleotide sequence ID" value="NC_011901.1"/>
</dbReference>
<dbReference type="SMR" id="B8GQV7"/>
<dbReference type="STRING" id="396588.Tgr7_1291"/>
<dbReference type="KEGG" id="tgr:Tgr7_1291"/>
<dbReference type="eggNOG" id="COG1551">
    <property type="taxonomic scope" value="Bacteria"/>
</dbReference>
<dbReference type="HOGENOM" id="CLU_164837_2_1_6"/>
<dbReference type="OrthoDB" id="9809061at2"/>
<dbReference type="Proteomes" id="UP000002383">
    <property type="component" value="Chromosome"/>
</dbReference>
<dbReference type="GO" id="GO:0005829">
    <property type="term" value="C:cytosol"/>
    <property type="evidence" value="ECO:0007669"/>
    <property type="project" value="TreeGrafter"/>
</dbReference>
<dbReference type="GO" id="GO:0048027">
    <property type="term" value="F:mRNA 5'-UTR binding"/>
    <property type="evidence" value="ECO:0007669"/>
    <property type="project" value="UniProtKB-UniRule"/>
</dbReference>
<dbReference type="GO" id="GO:0006402">
    <property type="term" value="P:mRNA catabolic process"/>
    <property type="evidence" value="ECO:0007669"/>
    <property type="project" value="InterPro"/>
</dbReference>
<dbReference type="GO" id="GO:0045947">
    <property type="term" value="P:negative regulation of translational initiation"/>
    <property type="evidence" value="ECO:0007669"/>
    <property type="project" value="UniProtKB-UniRule"/>
</dbReference>
<dbReference type="GO" id="GO:0045948">
    <property type="term" value="P:positive regulation of translational initiation"/>
    <property type="evidence" value="ECO:0007669"/>
    <property type="project" value="UniProtKB-UniRule"/>
</dbReference>
<dbReference type="GO" id="GO:0006109">
    <property type="term" value="P:regulation of carbohydrate metabolic process"/>
    <property type="evidence" value="ECO:0007669"/>
    <property type="project" value="UniProtKB-UniRule"/>
</dbReference>
<dbReference type="FunFam" id="2.60.40.4380:FF:000001">
    <property type="entry name" value="Translational regulator CsrA"/>
    <property type="match status" value="1"/>
</dbReference>
<dbReference type="Gene3D" id="2.60.40.4380">
    <property type="entry name" value="Translational regulator CsrA"/>
    <property type="match status" value="1"/>
</dbReference>
<dbReference type="HAMAP" id="MF_00167">
    <property type="entry name" value="CsrA"/>
    <property type="match status" value="1"/>
</dbReference>
<dbReference type="InterPro" id="IPR003751">
    <property type="entry name" value="CsrA"/>
</dbReference>
<dbReference type="InterPro" id="IPR036107">
    <property type="entry name" value="CsrA_sf"/>
</dbReference>
<dbReference type="NCBIfam" id="TIGR00202">
    <property type="entry name" value="csrA"/>
    <property type="match status" value="1"/>
</dbReference>
<dbReference type="NCBIfam" id="NF002469">
    <property type="entry name" value="PRK01712.1"/>
    <property type="match status" value="1"/>
</dbReference>
<dbReference type="PANTHER" id="PTHR34984">
    <property type="entry name" value="CARBON STORAGE REGULATOR"/>
    <property type="match status" value="1"/>
</dbReference>
<dbReference type="PANTHER" id="PTHR34984:SF1">
    <property type="entry name" value="CARBON STORAGE REGULATOR"/>
    <property type="match status" value="1"/>
</dbReference>
<dbReference type="Pfam" id="PF02599">
    <property type="entry name" value="CsrA"/>
    <property type="match status" value="1"/>
</dbReference>
<dbReference type="SUPFAM" id="SSF117130">
    <property type="entry name" value="CsrA-like"/>
    <property type="match status" value="1"/>
</dbReference>
<name>CSRA_THISH</name>
<feature type="chain" id="PRO_1000123634" description="Translational regulator CsrA">
    <location>
        <begin position="1"/>
        <end position="64"/>
    </location>
</feature>